<comment type="function">
    <text evidence="1">Involved in a phospholipid transport pathway that maintains lipid asymmetry in the outer membrane by retrograde trafficking of phospholipids from the outer membrane to the inner membrane. May transfer phospholipid across the periplasmic space and deliver it to the MlaFEDB complex at the inner membrane.</text>
</comment>
<comment type="subcellular location">
    <subcellularLocation>
        <location evidence="1">Periplasm</location>
    </subcellularLocation>
</comment>
<comment type="similarity">
    <text evidence="3">Belongs to the MlaC/ttg2D family.</text>
</comment>
<dbReference type="EMBL" id="AF053073">
    <property type="protein sequence ID" value="AAF21249.1"/>
    <property type="molecule type" value="Genomic_DNA"/>
</dbReference>
<dbReference type="EMBL" id="AE005674">
    <property type="protein sequence ID" value="AAN44698.1"/>
    <property type="molecule type" value="Genomic_DNA"/>
</dbReference>
<dbReference type="EMBL" id="AE014073">
    <property type="protein sequence ID" value="AAP18512.1"/>
    <property type="molecule type" value="Genomic_DNA"/>
</dbReference>
<dbReference type="RefSeq" id="WP_000476487.1">
    <property type="nucleotide sequence ID" value="NZ_WPGW01000004.1"/>
</dbReference>
<dbReference type="SMR" id="P0ADV8"/>
<dbReference type="STRING" id="198214.SF3232"/>
<dbReference type="PaxDb" id="198214-SF3232"/>
<dbReference type="GeneID" id="75206048"/>
<dbReference type="KEGG" id="sfl:SF3232"/>
<dbReference type="KEGG" id="sfx:S3450"/>
<dbReference type="PATRIC" id="fig|198214.7.peg.3833"/>
<dbReference type="HOGENOM" id="CLU_094502_3_0_6"/>
<dbReference type="Proteomes" id="UP000001006">
    <property type="component" value="Chromosome"/>
</dbReference>
<dbReference type="Proteomes" id="UP000002673">
    <property type="component" value="Chromosome"/>
</dbReference>
<dbReference type="GO" id="GO:0042597">
    <property type="term" value="C:periplasmic space"/>
    <property type="evidence" value="ECO:0007669"/>
    <property type="project" value="UniProtKB-SubCell"/>
</dbReference>
<dbReference type="FunFam" id="3.10.450.710:FF:000001">
    <property type="entry name" value="ABC transporter substrate-binding protein MlaC"/>
    <property type="match status" value="1"/>
</dbReference>
<dbReference type="Gene3D" id="3.10.450.710">
    <property type="entry name" value="Tgt2/MlaC"/>
    <property type="match status" value="1"/>
</dbReference>
<dbReference type="InterPro" id="IPR008869">
    <property type="entry name" value="MlaC/ttg2D"/>
</dbReference>
<dbReference type="InterPro" id="IPR042245">
    <property type="entry name" value="Tgt2/MlaC_sf"/>
</dbReference>
<dbReference type="NCBIfam" id="NF011697">
    <property type="entry name" value="PRK15117.1"/>
    <property type="match status" value="1"/>
</dbReference>
<dbReference type="PANTHER" id="PTHR36573">
    <property type="entry name" value="INTERMEMBRANE PHOSPHOLIPID TRANSPORT SYSTEM BINDING PROTEIN MLAC"/>
    <property type="match status" value="1"/>
</dbReference>
<dbReference type="PANTHER" id="PTHR36573:SF1">
    <property type="entry name" value="INTERMEMBRANE PHOSPHOLIPID TRANSPORT SYSTEM BINDING PROTEIN MLAC"/>
    <property type="match status" value="1"/>
</dbReference>
<dbReference type="Pfam" id="PF05494">
    <property type="entry name" value="MlaC"/>
    <property type="match status" value="1"/>
</dbReference>
<dbReference type="PIRSF" id="PIRSF004649">
    <property type="entry name" value="MlaC"/>
    <property type="match status" value="1"/>
</dbReference>
<organism>
    <name type="scientific">Shigella flexneri</name>
    <dbReference type="NCBI Taxonomy" id="623"/>
    <lineage>
        <taxon>Bacteria</taxon>
        <taxon>Pseudomonadati</taxon>
        <taxon>Pseudomonadota</taxon>
        <taxon>Gammaproteobacteria</taxon>
        <taxon>Enterobacterales</taxon>
        <taxon>Enterobacteriaceae</taxon>
        <taxon>Shigella</taxon>
    </lineage>
</organism>
<protein>
    <recommendedName>
        <fullName evidence="1">Intermembrane phospholipid transport system binding protein MlaC</fullName>
    </recommendedName>
</protein>
<name>MLAC_SHIFL</name>
<reference key="1">
    <citation type="journal article" date="1998" name="Infect. Immun.">
        <title>Identification of two Shigella flexneri chromosomal loci involved in intercellular spreading.</title>
        <authorList>
            <person name="Hong M."/>
            <person name="Gleason Y."/>
            <person name="Wyckoff E.E."/>
            <person name="Payne S.M."/>
        </authorList>
    </citation>
    <scope>NUCLEOTIDE SEQUENCE [GENOMIC DNA]</scope>
    <source>
        <strain>SA100 / Serotype 2a</strain>
    </source>
</reference>
<reference key="2">
    <citation type="journal article" date="2002" name="Nucleic Acids Res.">
        <title>Genome sequence of Shigella flexneri 2a: insights into pathogenicity through comparison with genomes of Escherichia coli K12 and O157.</title>
        <authorList>
            <person name="Jin Q."/>
            <person name="Yuan Z."/>
            <person name="Xu J."/>
            <person name="Wang Y."/>
            <person name="Shen Y."/>
            <person name="Lu W."/>
            <person name="Wang J."/>
            <person name="Liu H."/>
            <person name="Yang J."/>
            <person name="Yang F."/>
            <person name="Zhang X."/>
            <person name="Zhang J."/>
            <person name="Yang G."/>
            <person name="Wu H."/>
            <person name="Qu D."/>
            <person name="Dong J."/>
            <person name="Sun L."/>
            <person name="Xue Y."/>
            <person name="Zhao A."/>
            <person name="Gao Y."/>
            <person name="Zhu J."/>
            <person name="Kan B."/>
            <person name="Ding K."/>
            <person name="Chen S."/>
            <person name="Cheng H."/>
            <person name="Yao Z."/>
            <person name="He B."/>
            <person name="Chen R."/>
            <person name="Ma D."/>
            <person name="Qiang B."/>
            <person name="Wen Y."/>
            <person name="Hou Y."/>
            <person name="Yu J."/>
        </authorList>
    </citation>
    <scope>NUCLEOTIDE SEQUENCE [LARGE SCALE GENOMIC DNA]</scope>
    <source>
        <strain>301 / Serotype 2a</strain>
    </source>
</reference>
<reference key="3">
    <citation type="journal article" date="2003" name="Infect. Immun.">
        <title>Complete genome sequence and comparative genomics of Shigella flexneri serotype 2a strain 2457T.</title>
        <authorList>
            <person name="Wei J."/>
            <person name="Goldberg M.B."/>
            <person name="Burland V."/>
            <person name="Venkatesan M.M."/>
            <person name="Deng W."/>
            <person name="Fournier G."/>
            <person name="Mayhew G.F."/>
            <person name="Plunkett G. III"/>
            <person name="Rose D.J."/>
            <person name="Darling A."/>
            <person name="Mau B."/>
            <person name="Perna N.T."/>
            <person name="Payne S.M."/>
            <person name="Runyen-Janecky L.J."/>
            <person name="Zhou S."/>
            <person name="Schwartz D.C."/>
            <person name="Blattner F.R."/>
        </authorList>
    </citation>
    <scope>NUCLEOTIDE SEQUENCE [LARGE SCALE GENOMIC DNA]</scope>
    <source>
        <strain>ATCC 700930 / 2457T / Serotype 2a</strain>
    </source>
</reference>
<proteinExistence type="inferred from homology"/>
<evidence type="ECO:0000250" key="1">
    <source>
        <dbReference type="UniProtKB" id="P0ADV7"/>
    </source>
</evidence>
<evidence type="ECO:0000255" key="2"/>
<evidence type="ECO:0000305" key="3"/>
<gene>
    <name evidence="1" type="primary">mlaC</name>
    <name type="ordered locus">SF3232</name>
    <name type="ordered locus">S3450</name>
</gene>
<keyword id="KW-0574">Periplasm</keyword>
<keyword id="KW-1185">Reference proteome</keyword>
<keyword id="KW-0732">Signal</keyword>
<accession>P0ADV8</accession>
<accession>P45390</accession>
<sequence>MFKRLMMVALLVIAPLSAATAADQTNPYKLMDEAAQKTFDRLKNEQPQIRANPDYLRTIVDQELLPYVQVKYAGALVLGQYYKSATPAQREAYFAAFREYLKQAYGQALAMYHGQTYQIAPEQPLGDKTIVPIRVTIIDPNGRPPVRLDFQWRKNSQTGNWQAYDMIAEGVSMITTKQNEWGTLLRTKGIDGLTAQLKSISQQKITLEEKK</sequence>
<feature type="signal peptide" evidence="2">
    <location>
        <begin position="1"/>
        <end position="21"/>
    </location>
</feature>
<feature type="chain" id="PRO_0000043112" description="Intermembrane phospholipid transport system binding protein MlaC">
    <location>
        <begin position="22"/>
        <end position="211"/>
    </location>
</feature>